<evidence type="ECO:0000250" key="1"/>
<evidence type="ECO:0000255" key="2"/>
<evidence type="ECO:0000256" key="3">
    <source>
        <dbReference type="SAM" id="MobiDB-lite"/>
    </source>
</evidence>
<evidence type="ECO:0000305" key="4"/>
<sequence>MVRFFGLNKEKNEEKENTDLPADNEQNAAETSSSNVSGNEERIDPNSRDTNPENANNDDASTTFGSSIQSSSIFSRGRMTYGTGASSSMATSEMRSHSSGHSRSKNSKNLQGFKDVGKPLRAVSFLNPVKEEESQDTQNTLDVSSSTSSTLATSGNARENSFTSRRSITLEYIHKSLSELEENLVDIMDDIHQDVISISKAVIEAIEYFKEFLPTTRDRIPYRISLEKSSSLRKINKIVLHFLDNLLVSDAFSNSRSILLRRFYFFLKKLNLITDDDLISESGVLPCLSVFCIGSHCNLPSMDKLGMILDELTKMDSSIISDQEGAFIAPILRGITPKSSILTIMFGLPNLQHEHYEMIKVLYSLFPDVHMYCVKDYIKKAASAVGSIPSHTAATIDTIAPTKFQFSPPYAVSENPLELPISMSLSTETSAKITGTLGGYLFPQTGSDEKFSQFASCSFAITCAHVVLSEKQDYPNVMVPSNVLQTSYKKVLTKESDRYPDGSVEKTAFLEEVQRIDQNLNWQKSNKFGQVVWGERAIVDHRLSDFAIIKVNSSFKCQNTLGNGLKSFPDPTLRFQNLHVKRKIFKMKPGMKVFKIGASTGYTSGELNSTKLVYWADGKLQSSEFVVASPTPLFASAGDSGAWILTKLEDRLGLGLVGMLHSYDGEQRQFGLFTPIGDILERLHAVTKIQWDIDPQLDG</sequence>
<feature type="propeptide" id="PRO_0000377375">
    <location>
        <begin position="1"/>
        <end position="381"/>
    </location>
</feature>
<feature type="chain" id="PRO_0000377376" description="SPS-sensor serine protease component SSY5">
    <location>
        <begin position="382"/>
        <end position="699"/>
    </location>
</feature>
<feature type="region of interest" description="Disordered" evidence="3">
    <location>
        <begin position="1"/>
        <end position="113"/>
    </location>
</feature>
<feature type="region of interest" description="Disordered" evidence="3">
    <location>
        <begin position="129"/>
        <end position="158"/>
    </location>
</feature>
<feature type="region of interest" description="Serine protease">
    <location>
        <begin position="459"/>
        <end position="699"/>
    </location>
</feature>
<feature type="compositionally biased region" description="Basic and acidic residues" evidence="3">
    <location>
        <begin position="8"/>
        <end position="18"/>
    </location>
</feature>
<feature type="compositionally biased region" description="Polar residues" evidence="3">
    <location>
        <begin position="24"/>
        <end position="38"/>
    </location>
</feature>
<feature type="compositionally biased region" description="Basic and acidic residues" evidence="3">
    <location>
        <begin position="39"/>
        <end position="51"/>
    </location>
</feature>
<feature type="compositionally biased region" description="Low complexity" evidence="3">
    <location>
        <begin position="61"/>
        <end position="78"/>
    </location>
</feature>
<feature type="compositionally biased region" description="Polar residues" evidence="3">
    <location>
        <begin position="83"/>
        <end position="93"/>
    </location>
</feature>
<feature type="compositionally biased region" description="Low complexity" evidence="3">
    <location>
        <begin position="144"/>
        <end position="154"/>
    </location>
</feature>
<feature type="active site" description="Charge relay system" evidence="2">
    <location>
        <position position="465"/>
    </location>
</feature>
<feature type="active site" description="Charge relay system" evidence="2">
    <location>
        <position position="545"/>
    </location>
</feature>
<feature type="active site" description="Charge relay system" evidence="2">
    <location>
        <position position="640"/>
    </location>
</feature>
<reference key="1">
    <citation type="journal article" date="2008" name="FEMS Yeast Res.">
        <title>Comparative genome analysis of a Saccharomyces cerevisiae wine strain.</title>
        <authorList>
            <person name="Borneman A.R."/>
            <person name="Forgan A.H."/>
            <person name="Pretorius I.S."/>
            <person name="Chambers P.J."/>
        </authorList>
    </citation>
    <scope>NUCLEOTIDE SEQUENCE [LARGE SCALE GENOMIC DNA]</scope>
    <source>
        <strain>AWRI1631</strain>
    </source>
</reference>
<protein>
    <recommendedName>
        <fullName>SPS-sensor serine protease component SSY5</fullName>
    </recommendedName>
    <alternativeName>
        <fullName>Endoprotease SSY5</fullName>
    </alternativeName>
</protein>
<gene>
    <name type="primary">SSY5</name>
    <name type="synonym">APF8</name>
    <name type="ORF">AWRI1631_100530</name>
</gene>
<name>SSY5_YEAS6</name>
<proteinExistence type="inferred from homology"/>
<comment type="function">
    <text evidence="1">Protease component of the SPS-sensor system, which regulates the expression of several amino acid-metabolizing enzymes and amino acid- and peptide-permeases in response to extracellular amino acid levels by controlling the activity of two transcription factors, STP1 and STP2. Catalyzes the activation of these transcription factors, which are synthesized as latent cytoplasmic precursors, by proteolytic removal of an N-terminal inhibitory domain containing cytoplasmic retention motifs. SSY5 binds as an inactive protease complex to STP1. In response to extracellular amino acids and dependent on the other SPS-sensor components, the inhibitory propeptide is induced to dissociate, and thereby enables the catalytic domain to process STP1 (By similarity).</text>
</comment>
<comment type="subunit">
    <text evidence="1">Component of the plasma membrane SPS (SSY1-PTR3-SSY5) amino acid sensor complex.</text>
</comment>
<comment type="subcellular location">
    <subcellularLocation>
        <location evidence="1">Cell membrane</location>
        <topology evidence="1">Peripheral membrane protein</topology>
        <orientation evidence="1">Cytoplasmic side</orientation>
    </subcellularLocation>
</comment>
<comment type="induction">
    <text evidence="1">Down-regulated after extracellular amino-acid addition.</text>
</comment>
<comment type="PTM">
    <text evidence="1">The propeptide is autoproteolytically cleaved from the catalytic domain but remains associated, forming an inactive protease complex. This processing occurs even in the absence of signaling (By similarity).</text>
</comment>
<comment type="similarity">
    <text evidence="4">Belongs to the peptidase S64 family.</text>
</comment>
<comment type="sequence caution" evidence="4">
    <conflict type="frameshift">
        <sequence resource="EMBL-CDS" id="EDZ71365"/>
    </conflict>
</comment>
<dbReference type="EMBL" id="ABSV01001268">
    <property type="protein sequence ID" value="EDZ71365.1"/>
    <property type="status" value="ALT_FRAME"/>
    <property type="molecule type" value="Genomic_DNA"/>
</dbReference>
<dbReference type="MEROPS" id="S64.001"/>
<dbReference type="OrthoDB" id="29913at4893"/>
<dbReference type="Proteomes" id="UP000008988">
    <property type="component" value="Unassembled WGS sequence"/>
</dbReference>
<dbReference type="GO" id="GO:0005886">
    <property type="term" value="C:plasma membrane"/>
    <property type="evidence" value="ECO:0007669"/>
    <property type="project" value="UniProtKB-SubCell"/>
</dbReference>
<dbReference type="InterPro" id="IPR009003">
    <property type="entry name" value="Peptidase_S1_PA"/>
</dbReference>
<dbReference type="InterPro" id="IPR012985">
    <property type="entry name" value="Peptidase_S64_Ssy5"/>
</dbReference>
<dbReference type="Pfam" id="PF08192">
    <property type="entry name" value="Peptidase_S64"/>
    <property type="match status" value="1"/>
</dbReference>
<dbReference type="PIRSF" id="PIRSF011716">
    <property type="entry name" value="Peptidase_S64_Ssy5"/>
    <property type="match status" value="1"/>
</dbReference>
<dbReference type="SUPFAM" id="SSF50494">
    <property type="entry name" value="Trypsin-like serine proteases"/>
    <property type="match status" value="1"/>
</dbReference>
<keyword id="KW-1003">Cell membrane</keyword>
<keyword id="KW-0472">Membrane</keyword>
<keyword id="KW-0865">Zymogen</keyword>
<organism>
    <name type="scientific">Saccharomyces cerevisiae (strain AWRI1631)</name>
    <name type="common">Baker's yeast</name>
    <dbReference type="NCBI Taxonomy" id="545124"/>
    <lineage>
        <taxon>Eukaryota</taxon>
        <taxon>Fungi</taxon>
        <taxon>Dikarya</taxon>
        <taxon>Ascomycota</taxon>
        <taxon>Saccharomycotina</taxon>
        <taxon>Saccharomycetes</taxon>
        <taxon>Saccharomycetales</taxon>
        <taxon>Saccharomycetaceae</taxon>
        <taxon>Saccharomyces</taxon>
    </lineage>
</organism>
<accession>B5VL29</accession>